<comment type="function">
    <text evidence="1">May be involved in a process influencing telomere capping.</text>
</comment>
<comment type="subcellular location">
    <subcellularLocation>
        <location evidence="1">Cytoplasm</location>
    </subcellularLocation>
</comment>
<comment type="similarity">
    <text evidence="3">Belongs to the RTC5 family.</text>
</comment>
<name>RTC5_ZYGRC</name>
<protein>
    <recommendedName>
        <fullName>Restriction of telomere capping protein 5</fullName>
    </recommendedName>
</protein>
<dbReference type="EMBL" id="CU928178">
    <property type="protein sequence ID" value="CAR28697.1"/>
    <property type="molecule type" value="Genomic_DNA"/>
</dbReference>
<dbReference type="RefSeq" id="XP_002497630.1">
    <property type="nucleotide sequence ID" value="XM_002497585.1"/>
</dbReference>
<dbReference type="SMR" id="C5DY36"/>
<dbReference type="FunCoup" id="C5DY36">
    <property type="interactions" value="19"/>
</dbReference>
<dbReference type="STRING" id="559307.C5DY36"/>
<dbReference type="GeneID" id="8205395"/>
<dbReference type="KEGG" id="zro:ZYRO0F09966g"/>
<dbReference type="HOGENOM" id="CLU_011918_1_0_1"/>
<dbReference type="InParanoid" id="C5DY36"/>
<dbReference type="Proteomes" id="UP000008536">
    <property type="component" value="Chromosome F"/>
</dbReference>
<dbReference type="GO" id="GO:0005737">
    <property type="term" value="C:cytoplasm"/>
    <property type="evidence" value="ECO:0007669"/>
    <property type="project" value="UniProtKB-SubCell"/>
</dbReference>
<dbReference type="GO" id="GO:0005634">
    <property type="term" value="C:nucleus"/>
    <property type="evidence" value="ECO:0007669"/>
    <property type="project" value="TreeGrafter"/>
</dbReference>
<dbReference type="GO" id="GO:0006979">
    <property type="term" value="P:response to oxidative stress"/>
    <property type="evidence" value="ECO:0007669"/>
    <property type="project" value="TreeGrafter"/>
</dbReference>
<dbReference type="InterPro" id="IPR006571">
    <property type="entry name" value="TLDc_dom"/>
</dbReference>
<dbReference type="PANTHER" id="PTHR23354">
    <property type="entry name" value="NUCLEOLAR PROTEIN 7/ESTROGEN RECEPTOR COACTIVATOR-RELATED"/>
    <property type="match status" value="1"/>
</dbReference>
<dbReference type="PANTHER" id="PTHR23354:SF130">
    <property type="entry name" value="RESTRICTION OF TELOMERE CAPPING PROTEIN 5"/>
    <property type="match status" value="1"/>
</dbReference>
<dbReference type="Pfam" id="PF07534">
    <property type="entry name" value="TLD"/>
    <property type="match status" value="1"/>
</dbReference>
<dbReference type="SMART" id="SM00584">
    <property type="entry name" value="TLDc"/>
    <property type="match status" value="1"/>
</dbReference>
<dbReference type="PROSITE" id="PS51886">
    <property type="entry name" value="TLDC"/>
    <property type="match status" value="1"/>
</dbReference>
<sequence>MGQRTSQATLQSSTHFTSNSDILKSFNDRALKQFTVTELVSFKNKLGKDLNERLTNEELTKWLSVPQDEILLRELLYNFVQVLGNFPLMKNSYENVTGIGVLKAIILTNPERCKKYVKSRNYDQLKLWFIALSIRKTVKEDPNLSSSSSSEESFDVTRILKTFDGLHVNELSVPFAYMVPFISWLLILTTYCPINNCKLENVAMFDNWNSYIKSAHTILRSMRPMDESSWIEYEPFAHTMRSIAPHIFDPLTRVMEHLLFKDDELVDPLSENRGEIASSKLLNSALLAQISSALSKQLPIYHLQRLYLGRDHGFSMRSFQAKVFKWSAPTIMLLRGKRILDDEEYSVKNTRFRKFLHEYPKLKPSDMDTEVEEMYPAKSKIILAVYVSDPWKITNKEFFGGPHTTIVQLSPFQEVFGSSRENALYFNTIGGGIGIGNKQPVIKSTAKSYSPGNVSLTMDSALEFAVLRHAGQGGVLKPGLVVGDKDFEVKMLLQDVEVWGCGGEKELEEQLKQWEWEESEAKRRQQINLRSIGEDRALLEMAGLVGQAQSGGSV</sequence>
<keyword id="KW-0963">Cytoplasm</keyword>
<keyword id="KW-1185">Reference proteome</keyword>
<proteinExistence type="inferred from homology"/>
<accession>C5DY36</accession>
<evidence type="ECO:0000250" key="1"/>
<evidence type="ECO:0000255" key="2">
    <source>
        <dbReference type="PROSITE-ProRule" id="PRU01234"/>
    </source>
</evidence>
<evidence type="ECO:0000305" key="3"/>
<reference key="1">
    <citation type="journal article" date="2009" name="Genome Res.">
        <title>Comparative genomics of protoploid Saccharomycetaceae.</title>
        <authorList>
            <consortium name="The Genolevures Consortium"/>
            <person name="Souciet J.-L."/>
            <person name="Dujon B."/>
            <person name="Gaillardin C."/>
            <person name="Johnston M."/>
            <person name="Baret P.V."/>
            <person name="Cliften P."/>
            <person name="Sherman D.J."/>
            <person name="Weissenbach J."/>
            <person name="Westhof E."/>
            <person name="Wincker P."/>
            <person name="Jubin C."/>
            <person name="Poulain J."/>
            <person name="Barbe V."/>
            <person name="Segurens B."/>
            <person name="Artiguenave F."/>
            <person name="Anthouard V."/>
            <person name="Vacherie B."/>
            <person name="Val M.-E."/>
            <person name="Fulton R.S."/>
            <person name="Minx P."/>
            <person name="Wilson R."/>
            <person name="Durrens P."/>
            <person name="Jean G."/>
            <person name="Marck C."/>
            <person name="Martin T."/>
            <person name="Nikolski M."/>
            <person name="Rolland T."/>
            <person name="Seret M.-L."/>
            <person name="Casaregola S."/>
            <person name="Despons L."/>
            <person name="Fairhead C."/>
            <person name="Fischer G."/>
            <person name="Lafontaine I."/>
            <person name="Leh V."/>
            <person name="Lemaire M."/>
            <person name="de Montigny J."/>
            <person name="Neuveglise C."/>
            <person name="Thierry A."/>
            <person name="Blanc-Lenfle I."/>
            <person name="Bleykasten C."/>
            <person name="Diffels J."/>
            <person name="Fritsch E."/>
            <person name="Frangeul L."/>
            <person name="Goeffon A."/>
            <person name="Jauniaux N."/>
            <person name="Kachouri-Lafond R."/>
            <person name="Payen C."/>
            <person name="Potier S."/>
            <person name="Pribylova L."/>
            <person name="Ozanne C."/>
            <person name="Richard G.-F."/>
            <person name="Sacerdot C."/>
            <person name="Straub M.-L."/>
            <person name="Talla E."/>
        </authorList>
    </citation>
    <scope>NUCLEOTIDE SEQUENCE [LARGE SCALE GENOMIC DNA]</scope>
    <source>
        <strain>ATCC 2623 / CBS 732 / BCRC 21506 / NBRC 1130 / NCYC 568 / NRRL Y-229</strain>
    </source>
</reference>
<feature type="chain" id="PRO_0000408855" description="Restriction of telomere capping protein 5">
    <location>
        <begin position="1"/>
        <end position="554"/>
    </location>
</feature>
<feature type="domain" description="TLDc" evidence="2">
    <location>
        <begin position="280"/>
        <end position="502"/>
    </location>
</feature>
<gene>
    <name type="primary">RTC5</name>
    <name type="ordered locus">ZYRO0F09966g</name>
</gene>
<organism>
    <name type="scientific">Zygosaccharomyces rouxii (strain ATCC 2623 / CBS 732 / NBRC 1130 / NCYC 568 / NRRL Y-229)</name>
    <dbReference type="NCBI Taxonomy" id="559307"/>
    <lineage>
        <taxon>Eukaryota</taxon>
        <taxon>Fungi</taxon>
        <taxon>Dikarya</taxon>
        <taxon>Ascomycota</taxon>
        <taxon>Saccharomycotina</taxon>
        <taxon>Saccharomycetes</taxon>
        <taxon>Saccharomycetales</taxon>
        <taxon>Saccharomycetaceae</taxon>
        <taxon>Zygosaccharomyces</taxon>
    </lineage>
</organism>